<protein>
    <recommendedName>
        <fullName>ATP-dependent RNA helicase DRS1</fullName>
        <ecNumber>3.6.4.13</ecNumber>
    </recommendedName>
</protein>
<reference key="1">
    <citation type="journal article" date="2004" name="Nature">
        <title>Genome evolution in yeasts.</title>
        <authorList>
            <person name="Dujon B."/>
            <person name="Sherman D."/>
            <person name="Fischer G."/>
            <person name="Durrens P."/>
            <person name="Casaregola S."/>
            <person name="Lafontaine I."/>
            <person name="de Montigny J."/>
            <person name="Marck C."/>
            <person name="Neuveglise C."/>
            <person name="Talla E."/>
            <person name="Goffard N."/>
            <person name="Frangeul L."/>
            <person name="Aigle M."/>
            <person name="Anthouard V."/>
            <person name="Babour A."/>
            <person name="Barbe V."/>
            <person name="Barnay S."/>
            <person name="Blanchin S."/>
            <person name="Beckerich J.-M."/>
            <person name="Beyne E."/>
            <person name="Bleykasten C."/>
            <person name="Boisrame A."/>
            <person name="Boyer J."/>
            <person name="Cattolico L."/>
            <person name="Confanioleri F."/>
            <person name="de Daruvar A."/>
            <person name="Despons L."/>
            <person name="Fabre E."/>
            <person name="Fairhead C."/>
            <person name="Ferry-Dumazet H."/>
            <person name="Groppi A."/>
            <person name="Hantraye F."/>
            <person name="Hennequin C."/>
            <person name="Jauniaux N."/>
            <person name="Joyet P."/>
            <person name="Kachouri R."/>
            <person name="Kerrest A."/>
            <person name="Koszul R."/>
            <person name="Lemaire M."/>
            <person name="Lesur I."/>
            <person name="Ma L."/>
            <person name="Muller H."/>
            <person name="Nicaud J.-M."/>
            <person name="Nikolski M."/>
            <person name="Oztas S."/>
            <person name="Ozier-Kalogeropoulos O."/>
            <person name="Pellenz S."/>
            <person name="Potier S."/>
            <person name="Richard G.-F."/>
            <person name="Straub M.-L."/>
            <person name="Suleau A."/>
            <person name="Swennen D."/>
            <person name="Tekaia F."/>
            <person name="Wesolowski-Louvel M."/>
            <person name="Westhof E."/>
            <person name="Wirth B."/>
            <person name="Zeniou-Meyer M."/>
            <person name="Zivanovic Y."/>
            <person name="Bolotin-Fukuhara M."/>
            <person name="Thierry A."/>
            <person name="Bouchier C."/>
            <person name="Caudron B."/>
            <person name="Scarpelli C."/>
            <person name="Gaillardin C."/>
            <person name="Weissenbach J."/>
            <person name="Wincker P."/>
            <person name="Souciet J.-L."/>
        </authorList>
    </citation>
    <scope>NUCLEOTIDE SEQUENCE [LARGE SCALE GENOMIC DNA]</scope>
    <source>
        <strain>ATCC 8585 / CBS 2359 / DSM 70799 / NBRC 1267 / NRRL Y-1140 / WM37</strain>
    </source>
</reference>
<keyword id="KW-0067">ATP-binding</keyword>
<keyword id="KW-0175">Coiled coil</keyword>
<keyword id="KW-0347">Helicase</keyword>
<keyword id="KW-0378">Hydrolase</keyword>
<keyword id="KW-0547">Nucleotide-binding</keyword>
<keyword id="KW-0539">Nucleus</keyword>
<keyword id="KW-1185">Reference proteome</keyword>
<keyword id="KW-0690">Ribosome biogenesis</keyword>
<keyword id="KW-0694">RNA-binding</keyword>
<evidence type="ECO:0000250" key="1"/>
<evidence type="ECO:0000255" key="2"/>
<evidence type="ECO:0000255" key="3">
    <source>
        <dbReference type="PROSITE-ProRule" id="PRU00541"/>
    </source>
</evidence>
<evidence type="ECO:0000255" key="4">
    <source>
        <dbReference type="PROSITE-ProRule" id="PRU00542"/>
    </source>
</evidence>
<evidence type="ECO:0000256" key="5">
    <source>
        <dbReference type="SAM" id="MobiDB-lite"/>
    </source>
</evidence>
<evidence type="ECO:0000305" key="6"/>
<proteinExistence type="inferred from homology"/>
<organism>
    <name type="scientific">Kluyveromyces lactis (strain ATCC 8585 / CBS 2359 / DSM 70799 / NBRC 1267 / NRRL Y-1140 / WM37)</name>
    <name type="common">Yeast</name>
    <name type="synonym">Candida sphaerica</name>
    <dbReference type="NCBI Taxonomy" id="284590"/>
    <lineage>
        <taxon>Eukaryota</taxon>
        <taxon>Fungi</taxon>
        <taxon>Dikarya</taxon>
        <taxon>Ascomycota</taxon>
        <taxon>Saccharomycotina</taxon>
        <taxon>Saccharomycetes</taxon>
        <taxon>Saccharomycetales</taxon>
        <taxon>Saccharomycetaceae</taxon>
        <taxon>Kluyveromyces</taxon>
    </lineage>
</organism>
<sequence>MAVKKFRSFDDFVPTISDSEEDVPDLDASDDEMEKKPVKSSKTKNKSKKKAKQQQGSHLDEDVHEDLNPEFQFSIDSGEVTTNFAGWDFQGDEKSDEVEKKDVDLDGIIRRKGGLIMMAATGSDAEESLSEESEEEPEEGDEPGESDDEDELALDGFGMGVKRKATEENEEDEEDEEEEDDDEDDDKKTEMSQADLGKGKDEDEDIEEDTKEEMAEFYAPEEESADAKKIVHKTFNSLSLSRPVLKGLGSLGYTSPSPIQSAAIPIALLGKDIIAGAVTGSGKTAAFMIPIIERLLYKPAHIASTRVVVLTPTRELAIQVADVGKNIGKFVNGLTFGLAVGGLNLRQQEQALKTRPDIVIATPGRFIDHLRNSASFSVDSVEILVIDEADRMLEEGFQEELQEIMSLIPSKRQTLLFSATMNSKIKQLISLSLKKPVRIMIDPPKQAADKLTQEFIRIRKRDHLKPALLYQLIRKLDNTSQKRIVVFVARKETAHKLRIVLGLLGMQVGELHGSLTQEQRLQSVNNFKSLQVPVLICTDLASRGLDIPKIEVVINFDMPKTYEIYLHRVGRTARAGREGRSVTFVGESSQDRSIVRSAIRSVEENAESGKALSRNVDWTQVEQVNSLIGAKGDVVEEIIEEEKQEKEILRAEMELRKGENMLKHKEEISARPRRTWFQSEAEKKNSKMLQVLAKNKKPINSKKRKQQEALAENPRLYKKTQKDRVEYQERQYSKKQAAYGKKGKKGKK</sequence>
<feature type="chain" id="PRO_0000232247" description="ATP-dependent RNA helicase DRS1">
    <location>
        <begin position="1"/>
        <end position="748"/>
    </location>
</feature>
<feature type="domain" description="Helicase ATP-binding" evidence="3">
    <location>
        <begin position="264"/>
        <end position="439"/>
    </location>
</feature>
<feature type="domain" description="Helicase C-terminal" evidence="4">
    <location>
        <begin position="468"/>
        <end position="628"/>
    </location>
</feature>
<feature type="region of interest" description="Disordered" evidence="5">
    <location>
        <begin position="1"/>
        <end position="72"/>
    </location>
</feature>
<feature type="region of interest" description="Disordered" evidence="5">
    <location>
        <begin position="111"/>
        <end position="211"/>
    </location>
</feature>
<feature type="region of interest" description="Disordered" evidence="5">
    <location>
        <begin position="687"/>
        <end position="748"/>
    </location>
</feature>
<feature type="coiled-coil region" evidence="2">
    <location>
        <begin position="632"/>
        <end position="667"/>
    </location>
</feature>
<feature type="short sequence motif" description="Q motif">
    <location>
        <begin position="233"/>
        <end position="261"/>
    </location>
</feature>
<feature type="short sequence motif" description="DEAD box">
    <location>
        <begin position="387"/>
        <end position="390"/>
    </location>
</feature>
<feature type="compositionally biased region" description="Acidic residues" evidence="5">
    <location>
        <begin position="18"/>
        <end position="32"/>
    </location>
</feature>
<feature type="compositionally biased region" description="Basic residues" evidence="5">
    <location>
        <begin position="38"/>
        <end position="52"/>
    </location>
</feature>
<feature type="compositionally biased region" description="Basic and acidic residues" evidence="5">
    <location>
        <begin position="58"/>
        <end position="67"/>
    </location>
</feature>
<feature type="compositionally biased region" description="Acidic residues" evidence="5">
    <location>
        <begin position="124"/>
        <end position="153"/>
    </location>
</feature>
<feature type="compositionally biased region" description="Acidic residues" evidence="5">
    <location>
        <begin position="168"/>
        <end position="185"/>
    </location>
</feature>
<feature type="compositionally biased region" description="Acidic residues" evidence="5">
    <location>
        <begin position="202"/>
        <end position="211"/>
    </location>
</feature>
<feature type="compositionally biased region" description="Basic residues" evidence="5">
    <location>
        <begin position="694"/>
        <end position="705"/>
    </location>
</feature>
<feature type="compositionally biased region" description="Basic and acidic residues" evidence="5">
    <location>
        <begin position="720"/>
        <end position="732"/>
    </location>
</feature>
<feature type="binding site" evidence="3">
    <location>
        <begin position="277"/>
        <end position="284"/>
    </location>
    <ligand>
        <name>ATP</name>
        <dbReference type="ChEBI" id="CHEBI:30616"/>
    </ligand>
</feature>
<accession>Q6CJV1</accession>
<name>DRS1_KLULA</name>
<gene>
    <name type="primary">DRS1</name>
    <name type="ordered locus">KLLA0F15752g</name>
</gene>
<dbReference type="EC" id="3.6.4.13"/>
<dbReference type="EMBL" id="CR382126">
    <property type="protein sequence ID" value="CAG98496.1"/>
    <property type="molecule type" value="Genomic_DNA"/>
</dbReference>
<dbReference type="RefSeq" id="XP_455788.1">
    <property type="nucleotide sequence ID" value="XM_455788.1"/>
</dbReference>
<dbReference type="SMR" id="Q6CJV1"/>
<dbReference type="FunCoup" id="Q6CJV1">
    <property type="interactions" value="974"/>
</dbReference>
<dbReference type="STRING" id="284590.Q6CJV1"/>
<dbReference type="PaxDb" id="284590-Q6CJV1"/>
<dbReference type="KEGG" id="kla:KLLA0_F15752g"/>
<dbReference type="eggNOG" id="KOG0338">
    <property type="taxonomic scope" value="Eukaryota"/>
</dbReference>
<dbReference type="HOGENOM" id="CLU_003041_3_2_1"/>
<dbReference type="InParanoid" id="Q6CJV1"/>
<dbReference type="OMA" id="MIDPPKQ"/>
<dbReference type="Proteomes" id="UP000000598">
    <property type="component" value="Chromosome F"/>
</dbReference>
<dbReference type="GO" id="GO:0005829">
    <property type="term" value="C:cytosol"/>
    <property type="evidence" value="ECO:0007669"/>
    <property type="project" value="TreeGrafter"/>
</dbReference>
<dbReference type="GO" id="GO:0005730">
    <property type="term" value="C:nucleolus"/>
    <property type="evidence" value="ECO:0007669"/>
    <property type="project" value="UniProtKB-SubCell"/>
</dbReference>
<dbReference type="GO" id="GO:0005524">
    <property type="term" value="F:ATP binding"/>
    <property type="evidence" value="ECO:0007669"/>
    <property type="project" value="UniProtKB-KW"/>
</dbReference>
<dbReference type="GO" id="GO:0016887">
    <property type="term" value="F:ATP hydrolysis activity"/>
    <property type="evidence" value="ECO:0007669"/>
    <property type="project" value="RHEA"/>
</dbReference>
<dbReference type="GO" id="GO:0003723">
    <property type="term" value="F:RNA binding"/>
    <property type="evidence" value="ECO:0007669"/>
    <property type="project" value="UniProtKB-KW"/>
</dbReference>
<dbReference type="GO" id="GO:0003724">
    <property type="term" value="F:RNA helicase activity"/>
    <property type="evidence" value="ECO:0007669"/>
    <property type="project" value="UniProtKB-EC"/>
</dbReference>
<dbReference type="GO" id="GO:0006364">
    <property type="term" value="P:rRNA processing"/>
    <property type="evidence" value="ECO:0007669"/>
    <property type="project" value="UniProtKB-ARBA"/>
</dbReference>
<dbReference type="CDD" id="cd17947">
    <property type="entry name" value="DEADc_DDX27"/>
    <property type="match status" value="1"/>
</dbReference>
<dbReference type="CDD" id="cd18787">
    <property type="entry name" value="SF2_C_DEAD"/>
    <property type="match status" value="1"/>
</dbReference>
<dbReference type="FunFam" id="3.40.50.300:FF:000842">
    <property type="entry name" value="ATP-dependent RNA helicase DRS1"/>
    <property type="match status" value="1"/>
</dbReference>
<dbReference type="Gene3D" id="3.40.50.300">
    <property type="entry name" value="P-loop containing nucleotide triphosphate hydrolases"/>
    <property type="match status" value="2"/>
</dbReference>
<dbReference type="InterPro" id="IPR011545">
    <property type="entry name" value="DEAD/DEAH_box_helicase_dom"/>
</dbReference>
<dbReference type="InterPro" id="IPR050079">
    <property type="entry name" value="DEAD_box_RNA_helicase"/>
</dbReference>
<dbReference type="InterPro" id="IPR014001">
    <property type="entry name" value="Helicase_ATP-bd"/>
</dbReference>
<dbReference type="InterPro" id="IPR001650">
    <property type="entry name" value="Helicase_C-like"/>
</dbReference>
<dbReference type="InterPro" id="IPR027417">
    <property type="entry name" value="P-loop_NTPase"/>
</dbReference>
<dbReference type="InterPro" id="IPR000629">
    <property type="entry name" value="RNA-helicase_DEAD-box_CS"/>
</dbReference>
<dbReference type="InterPro" id="IPR014014">
    <property type="entry name" value="RNA_helicase_DEAD_Q_motif"/>
</dbReference>
<dbReference type="PANTHER" id="PTHR47959:SF1">
    <property type="entry name" value="ATP-DEPENDENT RNA HELICASE DBPA"/>
    <property type="match status" value="1"/>
</dbReference>
<dbReference type="PANTHER" id="PTHR47959">
    <property type="entry name" value="ATP-DEPENDENT RNA HELICASE RHLE-RELATED"/>
    <property type="match status" value="1"/>
</dbReference>
<dbReference type="Pfam" id="PF00270">
    <property type="entry name" value="DEAD"/>
    <property type="match status" value="1"/>
</dbReference>
<dbReference type="Pfam" id="PF00271">
    <property type="entry name" value="Helicase_C"/>
    <property type="match status" value="1"/>
</dbReference>
<dbReference type="SMART" id="SM00487">
    <property type="entry name" value="DEXDc"/>
    <property type="match status" value="1"/>
</dbReference>
<dbReference type="SMART" id="SM00490">
    <property type="entry name" value="HELICc"/>
    <property type="match status" value="1"/>
</dbReference>
<dbReference type="SUPFAM" id="SSF52540">
    <property type="entry name" value="P-loop containing nucleoside triphosphate hydrolases"/>
    <property type="match status" value="1"/>
</dbReference>
<dbReference type="PROSITE" id="PS00039">
    <property type="entry name" value="DEAD_ATP_HELICASE"/>
    <property type="match status" value="1"/>
</dbReference>
<dbReference type="PROSITE" id="PS51192">
    <property type="entry name" value="HELICASE_ATP_BIND_1"/>
    <property type="match status" value="1"/>
</dbReference>
<dbReference type="PROSITE" id="PS51194">
    <property type="entry name" value="HELICASE_CTER"/>
    <property type="match status" value="1"/>
</dbReference>
<dbReference type="PROSITE" id="PS51195">
    <property type="entry name" value="Q_MOTIF"/>
    <property type="match status" value="1"/>
</dbReference>
<comment type="function">
    <text evidence="1">ATP-binding RNA helicase involved in ribosome assembly.</text>
</comment>
<comment type="catalytic activity">
    <reaction>
        <text>ATP + H2O = ADP + phosphate + H(+)</text>
        <dbReference type="Rhea" id="RHEA:13065"/>
        <dbReference type="ChEBI" id="CHEBI:15377"/>
        <dbReference type="ChEBI" id="CHEBI:15378"/>
        <dbReference type="ChEBI" id="CHEBI:30616"/>
        <dbReference type="ChEBI" id="CHEBI:43474"/>
        <dbReference type="ChEBI" id="CHEBI:456216"/>
        <dbReference type="EC" id="3.6.4.13"/>
    </reaction>
</comment>
<comment type="subunit">
    <text evidence="1">Associates with pre-ribosomal particles.</text>
</comment>
<comment type="subcellular location">
    <subcellularLocation>
        <location evidence="1">Nucleus</location>
        <location evidence="1">Nucleolus</location>
    </subcellularLocation>
</comment>
<comment type="domain">
    <text>The Q motif is unique to and characteristic of the DEAD box family of RNA helicases and controls ATP binding and hydrolysis.</text>
</comment>
<comment type="similarity">
    <text evidence="6">Belongs to the DEAD box helicase family. DDX27/DRS1 subfamily.</text>
</comment>